<protein>
    <recommendedName>
        <fullName>Disintegrin and metalloproteinase domain-containing protein 11</fullName>
        <shortName>ADAM 11</shortName>
    </recommendedName>
    <alternativeName>
        <fullName>Metalloproteinase-like, disintegrin-like, and cysteine-rich protein</fullName>
        <shortName>MDC</shortName>
    </alternativeName>
</protein>
<reference key="1">
    <citation type="journal article" date="1998" name="Biochem. J.">
        <title>Metalloproteinase-like, disintegrin-like, cysteine-rich proteins MDC2 and MDC3: novel human cellular disintegrins highly expressed in the brain.</title>
        <authorList>
            <person name="Sagane K."/>
            <person name="Ohya Y."/>
            <person name="Hasegawa Y."/>
            <person name="Tanaka I."/>
        </authorList>
    </citation>
    <scope>NUCLEOTIDE SEQUENCE [MRNA] (ISOFORM LONG)</scope>
    <source>
        <tissue>Brain</tissue>
    </source>
</reference>
<reference key="2">
    <citation type="journal article" date="1993" name="Nat. Genet.">
        <title>A novel metalloprotease/disintegrin-like gene at 17q21.3 is somatically rearranged in two primary breast cancers.</title>
        <authorList>
            <person name="Emi M."/>
            <person name="Katagiri T."/>
            <person name="Harada Y."/>
            <person name="Saito H."/>
            <person name="Inazawa J."/>
            <person name="Ito I."/>
            <person name="Kasumi F."/>
            <person name="Nakamura Y."/>
        </authorList>
    </citation>
    <scope>NUCLEOTIDE SEQUENCE [MRNA] (ISOFORM SHORT)</scope>
    <source>
        <tissue>Cerebellum</tissue>
    </source>
</reference>
<reference key="3">
    <citation type="journal article" date="1995" name="Cytogenet. Cell Genet.">
        <title>Human metalloprotease/disintegrin-like (MDC) gene: exon-intron organization and alternative splicing.</title>
        <authorList>
            <person name="Katagiri T."/>
            <person name="Harada Y."/>
            <person name="Emi M."/>
            <person name="Nakamura Y."/>
        </authorList>
    </citation>
    <scope>NUCLEOTIDE SEQUENCE [GENOMIC DNA] OF 106-769 (ISOFORMS LONG AND SHORT)</scope>
    <source>
        <tissue>Brain</tissue>
        <tissue>Mammary gland</tissue>
        <tissue>Ovary</tissue>
        <tissue>Testis</tissue>
    </source>
</reference>
<reference key="4">
    <citation type="journal article" date="2004" name="Genome Biol.">
        <title>An unappreciated role for RNA surveillance.</title>
        <authorList>
            <person name="Hillman R.T."/>
            <person name="Green R.E."/>
            <person name="Brenner S.E."/>
        </authorList>
    </citation>
    <scope>SPLICE ISOFORM(S) THAT ARE POTENTIAL NMD TARGET(S)</scope>
</reference>
<reference key="5">
    <citation type="journal article" date="2008" name="Science">
        <title>Core signaling pathways in human pancreatic cancers revealed by global genomic analyses.</title>
        <authorList>
            <person name="Jones S."/>
            <person name="Zhang X."/>
            <person name="Parsons D.W."/>
            <person name="Lin J.C."/>
            <person name="Leary R.J."/>
            <person name="Angenendt P."/>
            <person name="Mankoo P."/>
            <person name="Carter H."/>
            <person name="Kamiyama H."/>
            <person name="Jimeno A."/>
            <person name="Hong S.M."/>
            <person name="Fu B."/>
            <person name="Lin M.T."/>
            <person name="Calhoun E.S."/>
            <person name="Kamiyama M."/>
            <person name="Walter K."/>
            <person name="Nikolskaya T."/>
            <person name="Nikolsky Y."/>
            <person name="Hartigan J."/>
            <person name="Smith D.R."/>
            <person name="Hidalgo M."/>
            <person name="Leach S.D."/>
            <person name="Klein A.P."/>
            <person name="Jaffee E.M."/>
            <person name="Goggins M."/>
            <person name="Maitra A."/>
            <person name="Iacobuzio-Donahue C."/>
            <person name="Eshleman J.R."/>
            <person name="Kern S.E."/>
            <person name="Hruban R.H."/>
            <person name="Karchin R."/>
            <person name="Papadopoulos N."/>
            <person name="Parmigiani G."/>
            <person name="Vogelstein B."/>
            <person name="Velculescu V.E."/>
            <person name="Kinzler K.W."/>
        </authorList>
    </citation>
    <scope>VARIANT [LARGE SCALE ANALYSIS] ARG-693</scope>
</reference>
<organism>
    <name type="scientific">Homo sapiens</name>
    <name type="common">Human</name>
    <dbReference type="NCBI Taxonomy" id="9606"/>
    <lineage>
        <taxon>Eukaryota</taxon>
        <taxon>Metazoa</taxon>
        <taxon>Chordata</taxon>
        <taxon>Craniata</taxon>
        <taxon>Vertebrata</taxon>
        <taxon>Euteleostomi</taxon>
        <taxon>Mammalia</taxon>
        <taxon>Eutheria</taxon>
        <taxon>Euarchontoglires</taxon>
        <taxon>Primates</taxon>
        <taxon>Haplorrhini</taxon>
        <taxon>Catarrhini</taxon>
        <taxon>Hominidae</taxon>
        <taxon>Homo</taxon>
    </lineage>
</organism>
<accession>O75078</accession>
<accession>Q14808</accession>
<accession>Q14809</accession>
<accession>Q14810</accession>
<evidence type="ECO:0000250" key="1"/>
<evidence type="ECO:0000250" key="2">
    <source>
        <dbReference type="UniProtKB" id="Q9R1V4"/>
    </source>
</evidence>
<evidence type="ECO:0000255" key="3"/>
<evidence type="ECO:0000255" key="4">
    <source>
        <dbReference type="PROSITE-ProRule" id="PRU00068"/>
    </source>
</evidence>
<evidence type="ECO:0000255" key="5">
    <source>
        <dbReference type="PROSITE-ProRule" id="PRU00076"/>
    </source>
</evidence>
<evidence type="ECO:0000255" key="6">
    <source>
        <dbReference type="PROSITE-ProRule" id="PRU00276"/>
    </source>
</evidence>
<evidence type="ECO:0000256" key="7">
    <source>
        <dbReference type="SAM" id="MobiDB-lite"/>
    </source>
</evidence>
<evidence type="ECO:0000269" key="8">
    <source>
    </source>
</evidence>
<evidence type="ECO:0000303" key="9">
    <source>
    </source>
</evidence>
<evidence type="ECO:0000305" key="10"/>
<name>ADA11_HUMAN</name>
<proteinExistence type="evidence at protein level"/>
<feature type="signal peptide" evidence="3">
    <location>
        <begin position="1"/>
        <end position="23"/>
    </location>
</feature>
<feature type="propeptide" id="PRO_0000029074" evidence="1">
    <location>
        <begin position="24"/>
        <end position="225"/>
    </location>
</feature>
<feature type="chain" id="PRO_0000029075" description="Disintegrin and metalloproteinase domain-containing protein 11">
    <location>
        <begin position="226"/>
        <end position="769"/>
    </location>
</feature>
<feature type="topological domain" description="Extracellular" evidence="3">
    <location>
        <begin position="226"/>
        <end position="734"/>
    </location>
</feature>
<feature type="transmembrane region" description="Helical" evidence="3">
    <location>
        <begin position="735"/>
        <end position="755"/>
    </location>
</feature>
<feature type="topological domain" description="Cytoplasmic" evidence="3">
    <location>
        <begin position="756"/>
        <end position="769"/>
    </location>
</feature>
<feature type="domain" description="Peptidase M12B" evidence="6">
    <location>
        <begin position="239"/>
        <end position="438"/>
    </location>
</feature>
<feature type="domain" description="Disintegrin" evidence="4">
    <location>
        <begin position="444"/>
        <end position="531"/>
    </location>
</feature>
<feature type="domain" description="EGF-like" evidence="5">
    <location>
        <begin position="677"/>
        <end position="709"/>
    </location>
</feature>
<feature type="region of interest" description="Disordered" evidence="7">
    <location>
        <begin position="40"/>
        <end position="78"/>
    </location>
</feature>
<feature type="region of interest" description="Required for localization to cerebellar cortex basket cell terminals. Also required for localization of KCNA1, KCNA2, DLG4 and ADAM22 to cerebellar cortex basket cell terminal perisomatic axons and pinceaux" evidence="2">
    <location>
        <begin position="332"/>
        <end position="769"/>
    </location>
</feature>
<feature type="compositionally biased region" description="Basic and acidic residues" evidence="7">
    <location>
        <begin position="61"/>
        <end position="73"/>
    </location>
</feature>
<feature type="glycosylation site" description="N-linked (GlcNAc...) asparagine" evidence="3">
    <location>
        <position position="96"/>
    </location>
</feature>
<feature type="glycosylation site" description="N-linked (GlcNAc...) asparagine" evidence="3">
    <location>
        <position position="163"/>
    </location>
</feature>
<feature type="glycosylation site" description="N-linked (GlcNAc...) asparagine" evidence="3">
    <location>
        <position position="605"/>
    </location>
</feature>
<feature type="glycosylation site" description="N-linked (GlcNAc...) asparagine" evidence="3">
    <location>
        <position position="673"/>
    </location>
</feature>
<feature type="disulfide bond" evidence="1">
    <location>
        <begin position="349"/>
        <end position="433"/>
    </location>
</feature>
<feature type="disulfide bond" evidence="1">
    <location>
        <begin position="392"/>
        <end position="417"/>
    </location>
</feature>
<feature type="disulfide bond" evidence="1">
    <location>
        <begin position="394"/>
        <end position="401"/>
    </location>
</feature>
<feature type="disulfide bond" evidence="1">
    <location>
        <begin position="503"/>
        <end position="523"/>
    </location>
</feature>
<feature type="disulfide bond" evidence="1">
    <location>
        <begin position="677"/>
        <end position="692"/>
    </location>
</feature>
<feature type="disulfide bond" evidence="1">
    <location>
        <begin position="686"/>
        <end position="698"/>
    </location>
</feature>
<feature type="disulfide bond" evidence="1">
    <location>
        <begin position="700"/>
        <end position="709"/>
    </location>
</feature>
<feature type="splice variant" id="VSP_005472" description="In isoform Short." evidence="9">
    <location>
        <begin position="1"/>
        <end position="99"/>
    </location>
</feature>
<feature type="splice variant" id="VSP_005473" description="In isoform Short." evidence="9">
    <original>DLELN</original>
    <variation>MCWLS</variation>
    <location>
        <begin position="100"/>
        <end position="104"/>
    </location>
</feature>
<feature type="splice variant" id="VSP_005474" description="In isoform Short." evidence="9">
    <original>DVLCGFLLCVNISGAPRLGDLVGDISSVT</original>
    <variation>PQQGRAVWLPPLCQHLWSSSARGPGGRHQ</variation>
    <location>
        <begin position="595"/>
        <end position="623"/>
    </location>
</feature>
<feature type="splice variant" id="VSP_005475" description="In isoform Short." evidence="9">
    <location>
        <begin position="624"/>
        <end position="769"/>
    </location>
</feature>
<feature type="sequence variant" id="VAR_062669" description="In a pancreatic ductal adenocarcinoma sample; somatic mutation." evidence="8">
    <original>S</original>
    <variation>R</variation>
    <location>
        <position position="693"/>
    </location>
</feature>
<feature type="sequence conflict" description="In Ref. 2; BAA06670 and 3; BAA06671." evidence="10" ref="2 3">
    <original>H</original>
    <variation>Q</variation>
    <location>
        <position position="106"/>
    </location>
</feature>
<feature type="sequence conflict" description="In Ref. 2; BAA04213." evidence="10" ref="2">
    <original>D</original>
    <variation>N</variation>
    <location>
        <position position="325"/>
    </location>
</feature>
<sequence length="769" mass="83418">MRLLRRWAFAALLLSLLPTPGLGTQGPAGALRWGGLPQLGGPGAPEVTEPSRLVRESSGGEVRKQQLDTRVRQEPPGGPPVHLAQVSFVIPAFNSNFTLDLELNHHLLSSQYVERHFSREGTTQHSTGAGDHCYYQGKLRGNPHSFAALSTCQGLHGVFSDGNLTYIVEPQEVAGPWGAPQGPLPHLIYRTPLLPDPLGCREPGCLFAVPAQSAPPNRPRLRRKRQVRRGHPTVHSETKYVELIVINDHQLFEQMRQSVVLTSNFAKSVVNLADVIYKEQLNTRIVLVAMETWADGDKIQVQDDLLETLARLMVYRREGLPEPSDATHLFSGRTFQSTSSGAAYVGGICSLSHGGGVNEYGNMGAMAVTLAQTLGQNLGMMWNKHRSSAGDCKCPDIWLGCIMEDTGFYLPRKFSRCSIDEYNQFLQEGGGSCLFNKPLKLLDPPECGNGFVEAGEECDCGSVQECSRAGGNCCKKCTLTHDAMCSDGLCCRRCKYEPRGVSCREAVNECDIAETCTGDSSQCPPNLHKLDGYYCDHEQGRCYGGRCKTRDRQCQVLWGHAAADRFCYEKLNVEGTERGSCGRKGSGWVQCSKQDVLCGFLLCVNISGAPRLGDLVGDISSVTFYHQGKELDCRGGHVQLADGSDLSYVEDGTACGPNMLCLDHRCLPASAFNFSTCPGSGERRICSHHGVCSNEGKCICQPDWTGKDCSIHNPLPTSPPTGETERYKGPSGTNIIIGSIAGAVLVAAIVLGGTGWGFKNIRRGRSGGA</sequence>
<dbReference type="EMBL" id="AB009675">
    <property type="protein sequence ID" value="BAA32352.1"/>
    <property type="molecule type" value="mRNA"/>
</dbReference>
<dbReference type="EMBL" id="D17390">
    <property type="protein sequence ID" value="BAA04213.1"/>
    <property type="molecule type" value="mRNA"/>
</dbReference>
<dbReference type="EMBL" id="D31872">
    <property type="protein sequence ID" value="BAA06670.1"/>
    <property type="molecule type" value="Genomic_DNA"/>
</dbReference>
<dbReference type="EMBL" id="D31872">
    <property type="protein sequence ID" value="BAA06671.1"/>
    <property type="molecule type" value="Genomic_DNA"/>
</dbReference>
<dbReference type="CCDS" id="CCDS11486.1">
    <molecule id="O75078-1"/>
</dbReference>
<dbReference type="PIR" id="I65967">
    <property type="entry name" value="I65967"/>
</dbReference>
<dbReference type="PIR" id="S38539">
    <property type="entry name" value="S38539"/>
</dbReference>
<dbReference type="RefSeq" id="NP_002381.2">
    <molecule id="O75078-1"/>
    <property type="nucleotide sequence ID" value="NM_002390.5"/>
</dbReference>
<dbReference type="SMR" id="O75078"/>
<dbReference type="BioGRID" id="110351">
    <property type="interactions" value="55"/>
</dbReference>
<dbReference type="FunCoup" id="O75078">
    <property type="interactions" value="168"/>
</dbReference>
<dbReference type="IntAct" id="O75078">
    <property type="interactions" value="25"/>
</dbReference>
<dbReference type="STRING" id="9606.ENSP00000200557"/>
<dbReference type="MEROPS" id="M12.976"/>
<dbReference type="TCDB" id="8.A.77.1.1">
    <property type="family name" value="the sheddase (sheddase) family"/>
</dbReference>
<dbReference type="GlyCosmos" id="O75078">
    <property type="glycosylation" value="4 sites, No reported glycans"/>
</dbReference>
<dbReference type="GlyGen" id="O75078">
    <property type="glycosylation" value="5 sites, 2 N-linked glycans (2 sites)"/>
</dbReference>
<dbReference type="iPTMnet" id="O75078"/>
<dbReference type="PhosphoSitePlus" id="O75078"/>
<dbReference type="BioMuta" id="ADAM11"/>
<dbReference type="MassIVE" id="O75078"/>
<dbReference type="PaxDb" id="9606-ENSP00000200557"/>
<dbReference type="PeptideAtlas" id="O75078"/>
<dbReference type="ProteomicsDB" id="49743">
    <molecule id="O75078-1"/>
</dbReference>
<dbReference type="ProteomicsDB" id="49744">
    <molecule id="O75078-2"/>
</dbReference>
<dbReference type="Antibodypedia" id="29870">
    <property type="antibodies" value="138 antibodies from 24 providers"/>
</dbReference>
<dbReference type="DNASU" id="4185"/>
<dbReference type="Ensembl" id="ENST00000200557.11">
    <molecule id="O75078-1"/>
    <property type="protein sequence ID" value="ENSP00000200557.6"/>
    <property type="gene ID" value="ENSG00000073670.14"/>
</dbReference>
<dbReference type="GeneID" id="4185"/>
<dbReference type="KEGG" id="hsa:4185"/>
<dbReference type="MANE-Select" id="ENST00000200557.11">
    <property type="protein sequence ID" value="ENSP00000200557.6"/>
    <property type="RefSeq nucleotide sequence ID" value="NM_002390.6"/>
    <property type="RefSeq protein sequence ID" value="NP_002381.2"/>
</dbReference>
<dbReference type="UCSC" id="uc002ihh.4">
    <molecule id="O75078-1"/>
    <property type="organism name" value="human"/>
</dbReference>
<dbReference type="AGR" id="HGNC:189"/>
<dbReference type="CTD" id="4185"/>
<dbReference type="DisGeNET" id="4185"/>
<dbReference type="GeneCards" id="ADAM11"/>
<dbReference type="HGNC" id="HGNC:189">
    <property type="gene designation" value="ADAM11"/>
</dbReference>
<dbReference type="HPA" id="ENSG00000073670">
    <property type="expression patterns" value="Tissue enriched (brain)"/>
</dbReference>
<dbReference type="MIM" id="155120">
    <property type="type" value="gene"/>
</dbReference>
<dbReference type="neXtProt" id="NX_O75078"/>
<dbReference type="OpenTargets" id="ENSG00000073670"/>
<dbReference type="PharmGKB" id="PA24506"/>
<dbReference type="VEuPathDB" id="HostDB:ENSG00000073670"/>
<dbReference type="eggNOG" id="KOG3607">
    <property type="taxonomic scope" value="Eukaryota"/>
</dbReference>
<dbReference type="GeneTree" id="ENSGT00940000159790"/>
<dbReference type="InParanoid" id="O75078"/>
<dbReference type="OMA" id="GAETHRY"/>
<dbReference type="OrthoDB" id="5951731at2759"/>
<dbReference type="PAN-GO" id="O75078">
    <property type="GO annotations" value="0 GO annotations based on evolutionary models"/>
</dbReference>
<dbReference type="PhylomeDB" id="O75078"/>
<dbReference type="TreeFam" id="TF314733"/>
<dbReference type="PathwayCommons" id="O75078"/>
<dbReference type="Reactome" id="R-HSA-5682910">
    <property type="pathway name" value="LGI-ADAM interactions"/>
</dbReference>
<dbReference type="SignaLink" id="O75078"/>
<dbReference type="BioGRID-ORCS" id="4185">
    <property type="hits" value="38 hits in 1145 CRISPR screens"/>
</dbReference>
<dbReference type="ChiTaRS" id="ADAM11">
    <property type="organism name" value="human"/>
</dbReference>
<dbReference type="GeneWiki" id="ADAM11"/>
<dbReference type="GenomeRNAi" id="4185"/>
<dbReference type="Pharos" id="O75078">
    <property type="development level" value="Tbio"/>
</dbReference>
<dbReference type="PRO" id="PR:O75078"/>
<dbReference type="Proteomes" id="UP000005640">
    <property type="component" value="Chromosome 17"/>
</dbReference>
<dbReference type="RNAct" id="O75078">
    <property type="molecule type" value="protein"/>
</dbReference>
<dbReference type="Bgee" id="ENSG00000073670">
    <property type="expression patterns" value="Expressed in right hemisphere of cerebellum and 139 other cell types or tissues"/>
</dbReference>
<dbReference type="ExpressionAtlas" id="O75078">
    <property type="expression patterns" value="baseline and differential"/>
</dbReference>
<dbReference type="GO" id="GO:0030424">
    <property type="term" value="C:axon"/>
    <property type="evidence" value="ECO:0007669"/>
    <property type="project" value="UniProtKB-SubCell"/>
</dbReference>
<dbReference type="GO" id="GO:0043204">
    <property type="term" value="C:perikaryon"/>
    <property type="evidence" value="ECO:0007669"/>
    <property type="project" value="UniProtKB-SubCell"/>
</dbReference>
<dbReference type="GO" id="GO:0005886">
    <property type="term" value="C:plasma membrane"/>
    <property type="evidence" value="ECO:0000304"/>
    <property type="project" value="Reactome"/>
</dbReference>
<dbReference type="GO" id="GO:0042734">
    <property type="term" value="C:presynaptic membrane"/>
    <property type="evidence" value="ECO:0007669"/>
    <property type="project" value="UniProtKB-SubCell"/>
</dbReference>
<dbReference type="GO" id="GO:0005178">
    <property type="term" value="F:integrin binding"/>
    <property type="evidence" value="ECO:0000304"/>
    <property type="project" value="ProtInc"/>
</dbReference>
<dbReference type="GO" id="GO:0004222">
    <property type="term" value="F:metalloendopeptidase activity"/>
    <property type="evidence" value="ECO:0000318"/>
    <property type="project" value="GO_Central"/>
</dbReference>
<dbReference type="GO" id="GO:0008237">
    <property type="term" value="F:metallopeptidase activity"/>
    <property type="evidence" value="ECO:0000304"/>
    <property type="project" value="ProtInc"/>
</dbReference>
<dbReference type="GO" id="GO:0061367">
    <property type="term" value="P:behavioral response to acetic acid induced pain"/>
    <property type="evidence" value="ECO:0000250"/>
    <property type="project" value="UniProtKB"/>
</dbReference>
<dbReference type="GO" id="GO:0061368">
    <property type="term" value="P:behavioral response to formalin induced pain"/>
    <property type="evidence" value="ECO:0000250"/>
    <property type="project" value="UniProtKB"/>
</dbReference>
<dbReference type="GO" id="GO:0045184">
    <property type="term" value="P:establishment of protein localization"/>
    <property type="evidence" value="ECO:0000250"/>
    <property type="project" value="UniProtKB"/>
</dbReference>
<dbReference type="GO" id="GO:0007229">
    <property type="term" value="P:integrin-mediated signaling pathway"/>
    <property type="evidence" value="ECO:0000304"/>
    <property type="project" value="ProtInc"/>
</dbReference>
<dbReference type="GO" id="GO:0033555">
    <property type="term" value="P:multicellular organismal response to stress"/>
    <property type="evidence" value="ECO:0000250"/>
    <property type="project" value="UniProtKB"/>
</dbReference>
<dbReference type="GO" id="GO:0006508">
    <property type="term" value="P:proteolysis"/>
    <property type="evidence" value="ECO:0000318"/>
    <property type="project" value="GO_Central"/>
</dbReference>
<dbReference type="CDD" id="cd04269">
    <property type="entry name" value="ZnMc_adamalysin_II_like"/>
    <property type="match status" value="1"/>
</dbReference>
<dbReference type="FunFam" id="2.10.25.10:FF:000147">
    <property type="entry name" value="Disintegrin and metalloproteinase domain-containing protein 11"/>
    <property type="match status" value="1"/>
</dbReference>
<dbReference type="FunFam" id="3.40.390.10:FF:000014">
    <property type="entry name" value="disintegrin and metalloproteinase domain-containing protein 11"/>
    <property type="match status" value="1"/>
</dbReference>
<dbReference type="FunFam" id="4.10.70.10:FF:000001">
    <property type="entry name" value="Disintegrin and metalloproteinase domain-containing protein 22"/>
    <property type="match status" value="1"/>
</dbReference>
<dbReference type="Gene3D" id="3.40.390.10">
    <property type="entry name" value="Collagenase (Catalytic Domain)"/>
    <property type="match status" value="1"/>
</dbReference>
<dbReference type="Gene3D" id="4.10.70.10">
    <property type="entry name" value="Disintegrin domain"/>
    <property type="match status" value="1"/>
</dbReference>
<dbReference type="Gene3D" id="2.10.25.10">
    <property type="entry name" value="Laminin"/>
    <property type="match status" value="1"/>
</dbReference>
<dbReference type="InterPro" id="IPR006586">
    <property type="entry name" value="ADAM_Cys-rich"/>
</dbReference>
<dbReference type="InterPro" id="IPR018358">
    <property type="entry name" value="Disintegrin_CS"/>
</dbReference>
<dbReference type="InterPro" id="IPR001762">
    <property type="entry name" value="Disintegrin_dom"/>
</dbReference>
<dbReference type="InterPro" id="IPR036436">
    <property type="entry name" value="Disintegrin_dom_sf"/>
</dbReference>
<dbReference type="InterPro" id="IPR000742">
    <property type="entry name" value="EGF-like_dom"/>
</dbReference>
<dbReference type="InterPro" id="IPR024079">
    <property type="entry name" value="MetalloPept_cat_dom_sf"/>
</dbReference>
<dbReference type="InterPro" id="IPR001590">
    <property type="entry name" value="Peptidase_M12B"/>
</dbReference>
<dbReference type="InterPro" id="IPR002870">
    <property type="entry name" value="Peptidase_M12B_N"/>
</dbReference>
<dbReference type="InterPro" id="IPR034027">
    <property type="entry name" value="Reprolysin_adamalysin"/>
</dbReference>
<dbReference type="PANTHER" id="PTHR11905">
    <property type="entry name" value="ADAM A DISINTEGRIN AND METALLOPROTEASE DOMAIN"/>
    <property type="match status" value="1"/>
</dbReference>
<dbReference type="PANTHER" id="PTHR11905:SF114">
    <property type="entry name" value="DISINTEGRIN AND METALLOPROTEINASE DOMAIN-CONTAINING PROTEIN 11"/>
    <property type="match status" value="1"/>
</dbReference>
<dbReference type="Pfam" id="PF08516">
    <property type="entry name" value="ADAM_CR"/>
    <property type="match status" value="1"/>
</dbReference>
<dbReference type="Pfam" id="PF00200">
    <property type="entry name" value="Disintegrin"/>
    <property type="match status" value="1"/>
</dbReference>
<dbReference type="Pfam" id="PF23106">
    <property type="entry name" value="EGF_Teneurin"/>
    <property type="match status" value="1"/>
</dbReference>
<dbReference type="Pfam" id="PF01562">
    <property type="entry name" value="Pep_M12B_propep"/>
    <property type="match status" value="1"/>
</dbReference>
<dbReference type="Pfam" id="PF01421">
    <property type="entry name" value="Reprolysin"/>
    <property type="match status" value="1"/>
</dbReference>
<dbReference type="PRINTS" id="PR00289">
    <property type="entry name" value="DISINTEGRIN"/>
</dbReference>
<dbReference type="SMART" id="SM00608">
    <property type="entry name" value="ACR"/>
    <property type="match status" value="1"/>
</dbReference>
<dbReference type="SMART" id="SM00050">
    <property type="entry name" value="DISIN"/>
    <property type="match status" value="1"/>
</dbReference>
<dbReference type="SUPFAM" id="SSF57552">
    <property type="entry name" value="Blood coagulation inhibitor (disintegrin)"/>
    <property type="match status" value="1"/>
</dbReference>
<dbReference type="SUPFAM" id="SSF55486">
    <property type="entry name" value="Metalloproteases ('zincins'), catalytic domain"/>
    <property type="match status" value="1"/>
</dbReference>
<dbReference type="PROSITE" id="PS50215">
    <property type="entry name" value="ADAM_MEPRO"/>
    <property type="match status" value="1"/>
</dbReference>
<dbReference type="PROSITE" id="PS00427">
    <property type="entry name" value="DISINTEGRIN_1"/>
    <property type="match status" value="1"/>
</dbReference>
<dbReference type="PROSITE" id="PS50214">
    <property type="entry name" value="DISINTEGRIN_2"/>
    <property type="match status" value="1"/>
</dbReference>
<dbReference type="PROSITE" id="PS00022">
    <property type="entry name" value="EGF_1"/>
    <property type="match status" value="1"/>
</dbReference>
<dbReference type="PROSITE" id="PS50026">
    <property type="entry name" value="EGF_3"/>
    <property type="match status" value="1"/>
</dbReference>
<gene>
    <name type="primary">ADAM11</name>
    <name type="synonym">MDC</name>
</gene>
<comment type="function">
    <text evidence="2">Probable ligand for integrin in the brain. This is a non catalytic metalloprotease-like protein. Required for localization of the potassium channel subunit proteins KCNA1/KV1.1 and KCNA2/KV1.2 at cerebellar cortex basket cell distal terminals, is thereby involved in ephaptic inhibitory synchronization of Purkinje cell firing and response to stress (By similarity). Plays a role in spatial learning and motor coordination (By similarity). Involved in the nociceptive pain response to chemical-derived stimulation (By similarity).</text>
</comment>
<comment type="subunit">
    <text evidence="2">Interacts with LGI1 and LGI4 (By similarity). Interacts with KCNA1/KV1.1, KCNA2/KV1.2, DLG4/PSD-95 and ADAM22 (By similarity).</text>
</comment>
<comment type="subcellular location">
    <subcellularLocation>
        <location evidence="2">Presynaptic cell membrane</location>
        <topology>Single-pass type I membrane protein</topology>
    </subcellularLocation>
    <subcellularLocation>
        <location evidence="2">Perikaryon</location>
    </subcellularLocation>
    <subcellularLocation>
        <location evidence="2">Cell projection</location>
        <location evidence="2">Axon</location>
    </subcellularLocation>
    <text evidence="2">Localizes to basket cell terminals and pinceaux.</text>
</comment>
<comment type="alternative products">
    <event type="alternative splicing"/>
    <isoform>
        <id>O75078-1</id>
        <name>Long</name>
        <name>MDC-769</name>
        <sequence type="displayed"/>
    </isoform>
    <isoform>
        <id>O75078-2</id>
        <name>Short</name>
        <name>MDC-524</name>
        <sequence type="described" ref="VSP_005472 VSP_005473 VSP_005474 VSP_005475"/>
    </isoform>
</comment>
<comment type="tissue specificity">
    <text>Expressed predominantly in brain. Slightly detected or not at all in other tissues.</text>
</comment>
<comment type="domain">
    <text>A conserved motif [AVN[ED]CD] within the disintegrin-like domain could be involved in the binding to the integrin receptor.</text>
</comment>
<comment type="PTM">
    <text evidence="1">The precursor is cleaved by a furin endopeptidase.</text>
</comment>
<comment type="miscellaneous">
    <molecule>Isoform Short</molecule>
    <text evidence="10">May be produced at very low levels due to a premature stop codon in the mRNA, leading to nonsense-mediated mRNA decay.</text>
</comment>
<keyword id="KW-0025">Alternative splicing</keyword>
<keyword id="KW-1003">Cell membrane</keyword>
<keyword id="KW-0966">Cell projection</keyword>
<keyword id="KW-0165">Cleavage on pair of basic residues</keyword>
<keyword id="KW-1015">Disulfide bond</keyword>
<keyword id="KW-0245">EGF-like domain</keyword>
<keyword id="KW-0325">Glycoprotein</keyword>
<keyword id="KW-0472">Membrane</keyword>
<keyword id="KW-1267">Proteomics identification</keyword>
<keyword id="KW-1185">Reference proteome</keyword>
<keyword id="KW-0732">Signal</keyword>
<keyword id="KW-0770">Synapse</keyword>
<keyword id="KW-0812">Transmembrane</keyword>
<keyword id="KW-1133">Transmembrane helix</keyword>